<dbReference type="EC" id="6.3.4.20" evidence="1"/>
<dbReference type="EMBL" id="AP009380">
    <property type="protein sequence ID" value="BAG33617.1"/>
    <property type="molecule type" value="Genomic_DNA"/>
</dbReference>
<dbReference type="RefSeq" id="WP_012458026.1">
    <property type="nucleotide sequence ID" value="NC_010729.1"/>
</dbReference>
<dbReference type="SMR" id="B2RJS2"/>
<dbReference type="GeneID" id="29256305"/>
<dbReference type="KEGG" id="pgn:PGN_1098"/>
<dbReference type="eggNOG" id="COG0603">
    <property type="taxonomic scope" value="Bacteria"/>
</dbReference>
<dbReference type="HOGENOM" id="CLU_081854_1_0_10"/>
<dbReference type="OrthoDB" id="9789567at2"/>
<dbReference type="BioCyc" id="PGIN431947:G1G2V-1248-MONOMER"/>
<dbReference type="UniPathway" id="UPA00391"/>
<dbReference type="Proteomes" id="UP000008842">
    <property type="component" value="Chromosome"/>
</dbReference>
<dbReference type="GO" id="GO:0005524">
    <property type="term" value="F:ATP binding"/>
    <property type="evidence" value="ECO:0007669"/>
    <property type="project" value="UniProtKB-UniRule"/>
</dbReference>
<dbReference type="GO" id="GO:0016879">
    <property type="term" value="F:ligase activity, forming carbon-nitrogen bonds"/>
    <property type="evidence" value="ECO:0007669"/>
    <property type="project" value="UniProtKB-UniRule"/>
</dbReference>
<dbReference type="GO" id="GO:0008270">
    <property type="term" value="F:zinc ion binding"/>
    <property type="evidence" value="ECO:0007669"/>
    <property type="project" value="UniProtKB-UniRule"/>
</dbReference>
<dbReference type="GO" id="GO:0008616">
    <property type="term" value="P:queuosine biosynthetic process"/>
    <property type="evidence" value="ECO:0007669"/>
    <property type="project" value="UniProtKB-UniRule"/>
</dbReference>
<dbReference type="CDD" id="cd01995">
    <property type="entry name" value="QueC-like"/>
    <property type="match status" value="1"/>
</dbReference>
<dbReference type="Gene3D" id="3.40.50.620">
    <property type="entry name" value="HUPs"/>
    <property type="match status" value="1"/>
</dbReference>
<dbReference type="HAMAP" id="MF_01633">
    <property type="entry name" value="QueC"/>
    <property type="match status" value="1"/>
</dbReference>
<dbReference type="InterPro" id="IPR018317">
    <property type="entry name" value="QueC"/>
</dbReference>
<dbReference type="InterPro" id="IPR014729">
    <property type="entry name" value="Rossmann-like_a/b/a_fold"/>
</dbReference>
<dbReference type="NCBIfam" id="TIGR00364">
    <property type="entry name" value="7-cyano-7-deazaguanine synthase QueC"/>
    <property type="match status" value="1"/>
</dbReference>
<dbReference type="PANTHER" id="PTHR42914">
    <property type="entry name" value="7-CYANO-7-DEAZAGUANINE SYNTHASE"/>
    <property type="match status" value="1"/>
</dbReference>
<dbReference type="PANTHER" id="PTHR42914:SF1">
    <property type="entry name" value="7-CYANO-7-DEAZAGUANINE SYNTHASE"/>
    <property type="match status" value="1"/>
</dbReference>
<dbReference type="Pfam" id="PF06508">
    <property type="entry name" value="QueC"/>
    <property type="match status" value="1"/>
</dbReference>
<dbReference type="PIRSF" id="PIRSF006293">
    <property type="entry name" value="ExsB"/>
    <property type="match status" value="1"/>
</dbReference>
<dbReference type="SUPFAM" id="SSF52402">
    <property type="entry name" value="Adenine nucleotide alpha hydrolases-like"/>
    <property type="match status" value="1"/>
</dbReference>
<sequence length="220" mass="24186">MQREKDSLIVVSGGMDSVTLMYEKRASIALALSFDYGSKHNARELSFARLHAERLGVEHLIIPLDFIGQYFQSDLLLSGGDIPEGRYDEENMKSTVVPFRNGIMLAVAAGLAESRGLRRIYIANHFGDHAIYPDCRASFIRPMTEAVRCGTTNGVLIEAPYTDITKTDIARIGASLGIDYAETWSCYKGGVFHCGVCGTCVERKEALHDAGIPDPTEYEG</sequence>
<feature type="chain" id="PRO_1000186618" description="7-cyano-7-deazaguanine synthase">
    <location>
        <begin position="1"/>
        <end position="220"/>
    </location>
</feature>
<feature type="binding site" evidence="1">
    <location>
        <begin position="11"/>
        <end position="21"/>
    </location>
    <ligand>
        <name>ATP</name>
        <dbReference type="ChEBI" id="CHEBI:30616"/>
    </ligand>
</feature>
<feature type="binding site" evidence="1">
    <location>
        <position position="186"/>
    </location>
    <ligand>
        <name>Zn(2+)</name>
        <dbReference type="ChEBI" id="CHEBI:29105"/>
    </ligand>
</feature>
<feature type="binding site" evidence="1">
    <location>
        <position position="194"/>
    </location>
    <ligand>
        <name>Zn(2+)</name>
        <dbReference type="ChEBI" id="CHEBI:29105"/>
    </ligand>
</feature>
<feature type="binding site" evidence="1">
    <location>
        <position position="197"/>
    </location>
    <ligand>
        <name>Zn(2+)</name>
        <dbReference type="ChEBI" id="CHEBI:29105"/>
    </ligand>
</feature>
<feature type="binding site" evidence="1">
    <location>
        <position position="200"/>
    </location>
    <ligand>
        <name>Zn(2+)</name>
        <dbReference type="ChEBI" id="CHEBI:29105"/>
    </ligand>
</feature>
<protein>
    <recommendedName>
        <fullName evidence="1">7-cyano-7-deazaguanine synthase</fullName>
        <ecNumber evidence="1">6.3.4.20</ecNumber>
    </recommendedName>
    <alternativeName>
        <fullName evidence="1">7-cyano-7-carbaguanine synthase</fullName>
    </alternativeName>
    <alternativeName>
        <fullName evidence="1">PreQ(0) synthase</fullName>
    </alternativeName>
    <alternativeName>
        <fullName evidence="1">Queuosine biosynthesis protein QueC</fullName>
    </alternativeName>
</protein>
<reference key="1">
    <citation type="journal article" date="2008" name="DNA Res.">
        <title>Determination of the genome sequence of Porphyromonas gingivalis strain ATCC 33277 and genomic comparison with strain W83 revealed extensive genome rearrangements in P. gingivalis.</title>
        <authorList>
            <person name="Naito M."/>
            <person name="Hirakawa H."/>
            <person name="Yamashita A."/>
            <person name="Ohara N."/>
            <person name="Shoji M."/>
            <person name="Yukitake H."/>
            <person name="Nakayama K."/>
            <person name="Toh H."/>
            <person name="Yoshimura F."/>
            <person name="Kuhara S."/>
            <person name="Hattori M."/>
            <person name="Hayashi T."/>
            <person name="Nakayama K."/>
        </authorList>
    </citation>
    <scope>NUCLEOTIDE SEQUENCE [LARGE SCALE GENOMIC DNA]</scope>
    <source>
        <strain>ATCC 33277 / DSM 20709 / CIP 103683 / JCM 12257 / NCTC 11834 / 2561</strain>
    </source>
</reference>
<gene>
    <name evidence="1" type="primary">queC</name>
    <name type="ordered locus">PGN_1098</name>
</gene>
<accession>B2RJS2</accession>
<organism>
    <name type="scientific">Porphyromonas gingivalis (strain ATCC 33277 / DSM 20709 / CIP 103683 / JCM 12257 / NCTC 11834 / 2561)</name>
    <dbReference type="NCBI Taxonomy" id="431947"/>
    <lineage>
        <taxon>Bacteria</taxon>
        <taxon>Pseudomonadati</taxon>
        <taxon>Bacteroidota</taxon>
        <taxon>Bacteroidia</taxon>
        <taxon>Bacteroidales</taxon>
        <taxon>Porphyromonadaceae</taxon>
        <taxon>Porphyromonas</taxon>
    </lineage>
</organism>
<comment type="function">
    <text evidence="1">Catalyzes the ATP-dependent conversion of 7-carboxy-7-deazaguanine (CDG) to 7-cyano-7-deazaguanine (preQ(0)).</text>
</comment>
<comment type="catalytic activity">
    <reaction evidence="1">
        <text>7-carboxy-7-deazaguanine + NH4(+) + ATP = 7-cyano-7-deazaguanine + ADP + phosphate + H2O + H(+)</text>
        <dbReference type="Rhea" id="RHEA:27982"/>
        <dbReference type="ChEBI" id="CHEBI:15377"/>
        <dbReference type="ChEBI" id="CHEBI:15378"/>
        <dbReference type="ChEBI" id="CHEBI:28938"/>
        <dbReference type="ChEBI" id="CHEBI:30616"/>
        <dbReference type="ChEBI" id="CHEBI:43474"/>
        <dbReference type="ChEBI" id="CHEBI:45075"/>
        <dbReference type="ChEBI" id="CHEBI:61036"/>
        <dbReference type="ChEBI" id="CHEBI:456216"/>
        <dbReference type="EC" id="6.3.4.20"/>
    </reaction>
</comment>
<comment type="cofactor">
    <cofactor evidence="1">
        <name>Zn(2+)</name>
        <dbReference type="ChEBI" id="CHEBI:29105"/>
    </cofactor>
    <text evidence="1">Binds 1 zinc ion per subunit.</text>
</comment>
<comment type="pathway">
    <text evidence="1">Purine metabolism; 7-cyano-7-deazaguanine biosynthesis.</text>
</comment>
<comment type="similarity">
    <text evidence="1">Belongs to the QueC family.</text>
</comment>
<keyword id="KW-0067">ATP-binding</keyword>
<keyword id="KW-0436">Ligase</keyword>
<keyword id="KW-0479">Metal-binding</keyword>
<keyword id="KW-0547">Nucleotide-binding</keyword>
<keyword id="KW-0671">Queuosine biosynthesis</keyword>
<keyword id="KW-0862">Zinc</keyword>
<evidence type="ECO:0000255" key="1">
    <source>
        <dbReference type="HAMAP-Rule" id="MF_01633"/>
    </source>
</evidence>
<proteinExistence type="inferred from homology"/>
<name>QUEC_PORG3</name>